<sequence>MTNKVYLLTDEQSKKIEHVLPTSDTTNLPQGTKYRTKISGHTVTLYNSNKLMIQGADSEVIGEQILSKAGIQLTQQLPDSNSTSKHNVSIESIQYDNYNCIGSDEAGSGDYFGPMTVVASYVSKKNAEILKVLGVMDSKNLKDRQIIELAEQIIPIIPHSLLVLDNIKYNERKQMGWSQVKMKAVLHNEAIKNVLNKIEEPVDYIVIDQFAVQGVYENYALGAIPERNKTKFETKGESKAIAIAASSIIARYAFVKHFEQIIKETGISITKGAGAKVDVEAAKIIKLRGIDYLDTITKKDFKNREKALKLIKK</sequence>
<feature type="chain" id="PRO_1000117701" description="Ribonuclease HIII">
    <location>
        <begin position="1"/>
        <end position="313"/>
    </location>
</feature>
<feature type="domain" description="RNase H type-2" evidence="2">
    <location>
        <begin position="98"/>
        <end position="313"/>
    </location>
</feature>
<feature type="binding site" evidence="1">
    <location>
        <position position="104"/>
    </location>
    <ligand>
        <name>a divalent metal cation</name>
        <dbReference type="ChEBI" id="CHEBI:60240"/>
    </ligand>
</feature>
<feature type="binding site" evidence="1">
    <location>
        <position position="105"/>
    </location>
    <ligand>
        <name>a divalent metal cation</name>
        <dbReference type="ChEBI" id="CHEBI:60240"/>
    </ligand>
</feature>
<feature type="binding site" evidence="1">
    <location>
        <position position="208"/>
    </location>
    <ligand>
        <name>a divalent metal cation</name>
        <dbReference type="ChEBI" id="CHEBI:60240"/>
    </ligand>
</feature>
<gene>
    <name evidence="1" type="primary">rnhC</name>
    <name type="ordered locus">MCCL_1325</name>
</gene>
<proteinExistence type="inferred from homology"/>
<evidence type="ECO:0000255" key="1">
    <source>
        <dbReference type="HAMAP-Rule" id="MF_00053"/>
    </source>
</evidence>
<evidence type="ECO:0000255" key="2">
    <source>
        <dbReference type="PROSITE-ProRule" id="PRU01319"/>
    </source>
</evidence>
<reference key="1">
    <citation type="journal article" date="2009" name="J. Bacteriol.">
        <title>Complete genome sequence of Macrococcus caseolyticus strain JCSCS5402, reflecting the ancestral genome of the human-pathogenic staphylococci.</title>
        <authorList>
            <person name="Baba T."/>
            <person name="Kuwahara-Arai K."/>
            <person name="Uchiyama I."/>
            <person name="Takeuchi F."/>
            <person name="Ito T."/>
            <person name="Hiramatsu K."/>
        </authorList>
    </citation>
    <scope>NUCLEOTIDE SEQUENCE [LARGE SCALE GENOMIC DNA]</scope>
    <source>
        <strain>JCSC5402</strain>
    </source>
</reference>
<protein>
    <recommendedName>
        <fullName evidence="1">Ribonuclease HIII</fullName>
        <shortName evidence="1">RNase HIII</shortName>
        <ecNumber evidence="1">3.1.26.4</ecNumber>
    </recommendedName>
</protein>
<dbReference type="EC" id="3.1.26.4" evidence="1"/>
<dbReference type="EMBL" id="AP009484">
    <property type="protein sequence ID" value="BAH18032.1"/>
    <property type="molecule type" value="Genomic_DNA"/>
</dbReference>
<dbReference type="RefSeq" id="WP_012657230.1">
    <property type="nucleotide sequence ID" value="NC_011999.1"/>
</dbReference>
<dbReference type="SMR" id="B9E764"/>
<dbReference type="STRING" id="458233.MCCL_1325"/>
<dbReference type="GeneID" id="61128773"/>
<dbReference type="KEGG" id="mcl:MCCL_1325"/>
<dbReference type="eggNOG" id="COG1039">
    <property type="taxonomic scope" value="Bacteria"/>
</dbReference>
<dbReference type="HOGENOM" id="CLU_059546_1_0_9"/>
<dbReference type="OrthoDB" id="9777935at2"/>
<dbReference type="Proteomes" id="UP000001383">
    <property type="component" value="Chromosome"/>
</dbReference>
<dbReference type="GO" id="GO:0005737">
    <property type="term" value="C:cytoplasm"/>
    <property type="evidence" value="ECO:0007669"/>
    <property type="project" value="UniProtKB-SubCell"/>
</dbReference>
<dbReference type="GO" id="GO:0032299">
    <property type="term" value="C:ribonuclease H2 complex"/>
    <property type="evidence" value="ECO:0007669"/>
    <property type="project" value="TreeGrafter"/>
</dbReference>
<dbReference type="GO" id="GO:0000287">
    <property type="term" value="F:magnesium ion binding"/>
    <property type="evidence" value="ECO:0007669"/>
    <property type="project" value="UniProtKB-UniRule"/>
</dbReference>
<dbReference type="GO" id="GO:0003723">
    <property type="term" value="F:RNA binding"/>
    <property type="evidence" value="ECO:0007669"/>
    <property type="project" value="InterPro"/>
</dbReference>
<dbReference type="GO" id="GO:0004523">
    <property type="term" value="F:RNA-DNA hybrid ribonuclease activity"/>
    <property type="evidence" value="ECO:0007669"/>
    <property type="project" value="UniProtKB-UniRule"/>
</dbReference>
<dbReference type="GO" id="GO:0043137">
    <property type="term" value="P:DNA replication, removal of RNA primer"/>
    <property type="evidence" value="ECO:0007669"/>
    <property type="project" value="TreeGrafter"/>
</dbReference>
<dbReference type="GO" id="GO:0006298">
    <property type="term" value="P:mismatch repair"/>
    <property type="evidence" value="ECO:0007669"/>
    <property type="project" value="TreeGrafter"/>
</dbReference>
<dbReference type="CDD" id="cd06590">
    <property type="entry name" value="RNase_HII_bacteria_HIII_like"/>
    <property type="match status" value="1"/>
</dbReference>
<dbReference type="CDD" id="cd14796">
    <property type="entry name" value="RNAse_HIII_N"/>
    <property type="match status" value="1"/>
</dbReference>
<dbReference type="FunFam" id="3.30.420.10:FF:000047">
    <property type="entry name" value="Ribonuclease HIII"/>
    <property type="match status" value="1"/>
</dbReference>
<dbReference type="Gene3D" id="3.30.420.10">
    <property type="entry name" value="Ribonuclease H-like superfamily/Ribonuclease H"/>
    <property type="match status" value="1"/>
</dbReference>
<dbReference type="Gene3D" id="3.30.310.10">
    <property type="entry name" value="TATA-Binding Protein"/>
    <property type="match status" value="1"/>
</dbReference>
<dbReference type="HAMAP" id="MF_00053">
    <property type="entry name" value="RNase_HIII"/>
    <property type="match status" value="1"/>
</dbReference>
<dbReference type="InterPro" id="IPR001352">
    <property type="entry name" value="RNase_HII/HIII"/>
</dbReference>
<dbReference type="InterPro" id="IPR024567">
    <property type="entry name" value="RNase_HII/HIII_dom"/>
</dbReference>
<dbReference type="InterPro" id="IPR004641">
    <property type="entry name" value="RNase_HIII"/>
</dbReference>
<dbReference type="InterPro" id="IPR024568">
    <property type="entry name" value="RNase_HIII_N"/>
</dbReference>
<dbReference type="InterPro" id="IPR012337">
    <property type="entry name" value="RNaseH-like_sf"/>
</dbReference>
<dbReference type="InterPro" id="IPR036397">
    <property type="entry name" value="RNaseH_sf"/>
</dbReference>
<dbReference type="InterPro" id="IPR012295">
    <property type="entry name" value="TBP_dom_sf"/>
</dbReference>
<dbReference type="NCBIfam" id="TIGR00716">
    <property type="entry name" value="rnhC"/>
    <property type="match status" value="1"/>
</dbReference>
<dbReference type="PANTHER" id="PTHR10954:SF23">
    <property type="entry name" value="RIBONUCLEASE"/>
    <property type="match status" value="1"/>
</dbReference>
<dbReference type="PANTHER" id="PTHR10954">
    <property type="entry name" value="RIBONUCLEASE H2 SUBUNIT A"/>
    <property type="match status" value="1"/>
</dbReference>
<dbReference type="Pfam" id="PF11858">
    <property type="entry name" value="DUF3378"/>
    <property type="match status" value="1"/>
</dbReference>
<dbReference type="Pfam" id="PF01351">
    <property type="entry name" value="RNase_HII"/>
    <property type="match status" value="1"/>
</dbReference>
<dbReference type="PIRSF" id="PIRSF037748">
    <property type="entry name" value="RnhC"/>
    <property type="match status" value="1"/>
</dbReference>
<dbReference type="SUPFAM" id="SSF53098">
    <property type="entry name" value="Ribonuclease H-like"/>
    <property type="match status" value="1"/>
</dbReference>
<dbReference type="PROSITE" id="PS51975">
    <property type="entry name" value="RNASE_H_2"/>
    <property type="match status" value="1"/>
</dbReference>
<organism>
    <name type="scientific">Macrococcus caseolyticus (strain JCSC5402)</name>
    <name type="common">Macrococcoides caseolyticum</name>
    <dbReference type="NCBI Taxonomy" id="458233"/>
    <lineage>
        <taxon>Bacteria</taxon>
        <taxon>Bacillati</taxon>
        <taxon>Bacillota</taxon>
        <taxon>Bacilli</taxon>
        <taxon>Bacillales</taxon>
        <taxon>Staphylococcaceae</taxon>
        <taxon>Macrococcoides</taxon>
    </lineage>
</organism>
<accession>B9E764</accession>
<comment type="function">
    <text evidence="1">Endonuclease that specifically degrades the RNA of RNA-DNA hybrids.</text>
</comment>
<comment type="catalytic activity">
    <reaction evidence="1">
        <text>Endonucleolytic cleavage to 5'-phosphomonoester.</text>
        <dbReference type="EC" id="3.1.26.4"/>
    </reaction>
</comment>
<comment type="cofactor">
    <cofactor evidence="1">
        <name>Mn(2+)</name>
        <dbReference type="ChEBI" id="CHEBI:29035"/>
    </cofactor>
    <cofactor evidence="1">
        <name>Mg(2+)</name>
        <dbReference type="ChEBI" id="CHEBI:18420"/>
    </cofactor>
    <text evidence="1">Manganese or magnesium. Binds 1 divalent metal ion per monomer in the absence of substrate. May bind a second metal ion after substrate binding.</text>
</comment>
<comment type="subcellular location">
    <subcellularLocation>
        <location evidence="1">Cytoplasm</location>
    </subcellularLocation>
</comment>
<comment type="similarity">
    <text evidence="1">Belongs to the RNase HII family. RnhC subfamily.</text>
</comment>
<name>RNH3_MACCJ</name>
<keyword id="KW-0963">Cytoplasm</keyword>
<keyword id="KW-0255">Endonuclease</keyword>
<keyword id="KW-0378">Hydrolase</keyword>
<keyword id="KW-0460">Magnesium</keyword>
<keyword id="KW-0479">Metal-binding</keyword>
<keyword id="KW-0540">Nuclease</keyword>
<keyword id="KW-1185">Reference proteome</keyword>